<organism>
    <name type="scientific">Drosophila melanogaster</name>
    <name type="common">Fruit fly</name>
    <dbReference type="NCBI Taxonomy" id="7227"/>
    <lineage>
        <taxon>Eukaryota</taxon>
        <taxon>Metazoa</taxon>
        <taxon>Ecdysozoa</taxon>
        <taxon>Arthropoda</taxon>
        <taxon>Hexapoda</taxon>
        <taxon>Insecta</taxon>
        <taxon>Pterygota</taxon>
        <taxon>Neoptera</taxon>
        <taxon>Endopterygota</taxon>
        <taxon>Diptera</taxon>
        <taxon>Brachycera</taxon>
        <taxon>Muscomorpha</taxon>
        <taxon>Ephydroidea</taxon>
        <taxon>Drosophilidae</taxon>
        <taxon>Drosophila</taxon>
        <taxon>Sophophora</taxon>
    </lineage>
</organism>
<proteinExistence type="evidence at protein level"/>
<feature type="transit peptide" description="Mitochondrion" evidence="4">
    <location>
        <begin position="1"/>
        <end status="unknown"/>
    </location>
</feature>
<feature type="chain" id="PRO_0000008877" description="Ferrochelatase, mitochondrial">
    <location>
        <begin status="unknown"/>
        <end position="384"/>
    </location>
</feature>
<feature type="active site" evidence="1">
    <location>
        <position position="190"/>
    </location>
</feature>
<feature type="active site" evidence="1">
    <location>
        <position position="343"/>
    </location>
</feature>
<feature type="binding site">
    <location>
        <position position="156"/>
    </location>
    <ligand>
        <name>[2Fe-2S] cluster</name>
        <dbReference type="ChEBI" id="CHEBI:190135"/>
    </ligand>
</feature>
<feature type="binding site">
    <location>
        <position position="363"/>
    </location>
    <ligand>
        <name>[2Fe-2S] cluster</name>
        <dbReference type="ChEBI" id="CHEBI:190135"/>
    </ligand>
</feature>
<feature type="binding site">
    <location>
        <position position="366"/>
    </location>
    <ligand>
        <name>[2Fe-2S] cluster</name>
        <dbReference type="ChEBI" id="CHEBI:190135"/>
    </ligand>
</feature>
<feature type="binding site">
    <location>
        <position position="371"/>
    </location>
    <ligand>
        <name>[2Fe-2S] cluster</name>
        <dbReference type="ChEBI" id="CHEBI:190135"/>
    </ligand>
</feature>
<feature type="splice variant" id="VSP_007689" description="In isoform B." evidence="6">
    <location>
        <begin position="1"/>
        <end position="158"/>
    </location>
</feature>
<feature type="splice variant" id="VSP_007690" description="In isoform B." evidence="6">
    <original>SGSSFNSIFTHYRSN</original>
    <variation>MHNCSYLFDPLYLFS</variation>
    <location>
        <begin position="159"/>
        <end position="173"/>
    </location>
</feature>
<feature type="splice variant" id="VSP_007691" description="In isoform C." evidence="6">
    <original>G</original>
    <variation>V</variation>
    <location>
        <position position="281"/>
    </location>
</feature>
<feature type="splice variant" id="VSP_007692" description="In isoform C." evidence="6">
    <location>
        <begin position="282"/>
        <end position="384"/>
    </location>
</feature>
<feature type="sequence conflict" description="In Ref. 1; AAC26225." evidence="7" ref="1">
    <original>P</original>
    <variation>A</variation>
    <location>
        <position position="269"/>
    </location>
</feature>
<gene>
    <name evidence="8" type="primary">FeCh</name>
    <name type="ORF">CG2098</name>
</gene>
<dbReference type="EC" id="4.98.1.1" evidence="5"/>
<dbReference type="EMBL" id="AF076220">
    <property type="protein sequence ID" value="AAC26225.1"/>
    <property type="molecule type" value="mRNA"/>
</dbReference>
<dbReference type="EMBL" id="AE014297">
    <property type="protein sequence ID" value="AAF57206.1"/>
    <property type="molecule type" value="Genomic_DNA"/>
</dbReference>
<dbReference type="EMBL" id="AE014297">
    <property type="protein sequence ID" value="AAN14294.1"/>
    <property type="molecule type" value="Genomic_DNA"/>
</dbReference>
<dbReference type="EMBL" id="AE014297">
    <property type="protein sequence ID" value="AAN14295.2"/>
    <property type="molecule type" value="Genomic_DNA"/>
</dbReference>
<dbReference type="EMBL" id="AY058251">
    <property type="protein sequence ID" value="AAL13480.1"/>
    <property type="molecule type" value="mRNA"/>
</dbReference>
<dbReference type="EMBL" id="BT001392">
    <property type="protein sequence ID" value="AAN71147.1"/>
    <property type="molecule type" value="mRNA"/>
</dbReference>
<dbReference type="EMBL" id="BT001878">
    <property type="protein sequence ID" value="AAN71652.1"/>
    <property type="molecule type" value="mRNA"/>
</dbReference>
<dbReference type="RefSeq" id="NP_524613.1">
    <molecule id="Q9V9S8-1"/>
    <property type="nucleotide sequence ID" value="NM_079874.3"/>
</dbReference>
<dbReference type="RefSeq" id="NP_733458.1">
    <molecule id="Q9V9S8-3"/>
    <property type="nucleotide sequence ID" value="NM_170579.3"/>
</dbReference>
<dbReference type="RefSeq" id="NP_733459.2">
    <molecule id="Q9V9S8-2"/>
    <property type="nucleotide sequence ID" value="NM_170580.3"/>
</dbReference>
<dbReference type="SMR" id="Q9V9S8"/>
<dbReference type="BioGRID" id="68598">
    <property type="interactions" value="2"/>
</dbReference>
<dbReference type="DIP" id="DIP-22800N"/>
<dbReference type="FunCoup" id="Q9V9S8">
    <property type="interactions" value="1657"/>
</dbReference>
<dbReference type="IntAct" id="Q9V9S8">
    <property type="interactions" value="6"/>
</dbReference>
<dbReference type="STRING" id="7227.FBpp0085208"/>
<dbReference type="PaxDb" id="7227-FBpp0085208"/>
<dbReference type="DNASU" id="43757"/>
<dbReference type="EnsemblMetazoa" id="FBtr0085849">
    <molecule id="Q9V9S8-1"/>
    <property type="protein sequence ID" value="FBpp0085208"/>
    <property type="gene ID" value="FBgn0266268"/>
</dbReference>
<dbReference type="EnsemblMetazoa" id="FBtr0085850">
    <molecule id="Q9V9S8-3"/>
    <property type="protein sequence ID" value="FBpp0085209"/>
    <property type="gene ID" value="FBgn0266268"/>
</dbReference>
<dbReference type="EnsemblMetazoa" id="FBtr0085851">
    <molecule id="Q9V9S8-2"/>
    <property type="protein sequence ID" value="FBpp0085210"/>
    <property type="gene ID" value="FBgn0266268"/>
</dbReference>
<dbReference type="GeneID" id="43757"/>
<dbReference type="KEGG" id="dme:Dmel_CG2098"/>
<dbReference type="UCSC" id="CG2098-RA">
    <molecule id="Q9V9S8-1"/>
    <property type="organism name" value="d. melanogaster"/>
</dbReference>
<dbReference type="AGR" id="FB:FBgn0266268"/>
<dbReference type="CTD" id="2235"/>
<dbReference type="FlyBase" id="FBgn0266268">
    <property type="gene designation" value="FeCH"/>
</dbReference>
<dbReference type="VEuPathDB" id="VectorBase:FBgn0266268"/>
<dbReference type="eggNOG" id="KOG1321">
    <property type="taxonomic scope" value="Eukaryota"/>
</dbReference>
<dbReference type="GeneTree" id="ENSGT00390000016258"/>
<dbReference type="InParanoid" id="Q9V9S8"/>
<dbReference type="OMA" id="DPYHCEC"/>
<dbReference type="OrthoDB" id="1323at2759"/>
<dbReference type="PhylomeDB" id="Q9V9S8"/>
<dbReference type="Reactome" id="R-DME-189451">
    <property type="pathway name" value="Heme biosynthesis"/>
</dbReference>
<dbReference type="Reactome" id="R-DME-9837999">
    <property type="pathway name" value="Mitochondrial protein degradation"/>
</dbReference>
<dbReference type="UniPathway" id="UPA00252">
    <property type="reaction ID" value="UER00325"/>
</dbReference>
<dbReference type="BioGRID-ORCS" id="43757">
    <property type="hits" value="0 hits in 1 CRISPR screen"/>
</dbReference>
<dbReference type="GenomeRNAi" id="43757"/>
<dbReference type="PRO" id="PR:Q9V9S8"/>
<dbReference type="Proteomes" id="UP000000803">
    <property type="component" value="Chromosome 3R"/>
</dbReference>
<dbReference type="Bgee" id="FBgn0266268">
    <property type="expression patterns" value="Expressed in adult tracheocyte (Drosophila) in open tracheal system trachea and 132 other cell types or tissues"/>
</dbReference>
<dbReference type="GO" id="GO:0005743">
    <property type="term" value="C:mitochondrial inner membrane"/>
    <property type="evidence" value="ECO:0000250"/>
    <property type="project" value="UniProtKB"/>
</dbReference>
<dbReference type="GO" id="GO:0005739">
    <property type="term" value="C:mitochondrion"/>
    <property type="evidence" value="ECO:0000318"/>
    <property type="project" value="GO_Central"/>
</dbReference>
<dbReference type="GO" id="GO:0051537">
    <property type="term" value="F:2 iron, 2 sulfur cluster binding"/>
    <property type="evidence" value="ECO:0007669"/>
    <property type="project" value="UniProtKB-KW"/>
</dbReference>
<dbReference type="GO" id="GO:0004325">
    <property type="term" value="F:ferrochelatase activity"/>
    <property type="evidence" value="ECO:0000314"/>
    <property type="project" value="FlyBase"/>
</dbReference>
<dbReference type="GO" id="GO:0046872">
    <property type="term" value="F:metal ion binding"/>
    <property type="evidence" value="ECO:0007669"/>
    <property type="project" value="UniProtKB-KW"/>
</dbReference>
<dbReference type="GO" id="GO:0006783">
    <property type="term" value="P:heme biosynthetic process"/>
    <property type="evidence" value="ECO:0000250"/>
    <property type="project" value="UniProtKB"/>
</dbReference>
<dbReference type="CDD" id="cd00419">
    <property type="entry name" value="Ferrochelatase_C"/>
    <property type="match status" value="1"/>
</dbReference>
<dbReference type="CDD" id="cd03411">
    <property type="entry name" value="Ferrochelatase_N"/>
    <property type="match status" value="1"/>
</dbReference>
<dbReference type="FunFam" id="3.40.50.1400:FF:000003">
    <property type="entry name" value="Ferrochelatase"/>
    <property type="match status" value="1"/>
</dbReference>
<dbReference type="Gene3D" id="3.40.50.1400">
    <property type="match status" value="2"/>
</dbReference>
<dbReference type="HAMAP" id="MF_00323">
    <property type="entry name" value="Ferrochelatase"/>
    <property type="match status" value="1"/>
</dbReference>
<dbReference type="InterPro" id="IPR001015">
    <property type="entry name" value="Ferrochelatase"/>
</dbReference>
<dbReference type="InterPro" id="IPR019772">
    <property type="entry name" value="Ferrochelatase_AS"/>
</dbReference>
<dbReference type="InterPro" id="IPR033644">
    <property type="entry name" value="Ferrochelatase_C"/>
</dbReference>
<dbReference type="InterPro" id="IPR033659">
    <property type="entry name" value="Ferrochelatase_N"/>
</dbReference>
<dbReference type="NCBIfam" id="TIGR00109">
    <property type="entry name" value="hemH"/>
    <property type="match status" value="1"/>
</dbReference>
<dbReference type="PANTHER" id="PTHR11108">
    <property type="entry name" value="FERROCHELATASE"/>
    <property type="match status" value="1"/>
</dbReference>
<dbReference type="PANTHER" id="PTHR11108:SF1">
    <property type="entry name" value="FERROCHELATASE, MITOCHONDRIAL"/>
    <property type="match status" value="1"/>
</dbReference>
<dbReference type="Pfam" id="PF00762">
    <property type="entry name" value="Ferrochelatase"/>
    <property type="match status" value="1"/>
</dbReference>
<dbReference type="SUPFAM" id="SSF53800">
    <property type="entry name" value="Chelatase"/>
    <property type="match status" value="1"/>
</dbReference>
<dbReference type="PROSITE" id="PS00534">
    <property type="entry name" value="FERROCHELATASE"/>
    <property type="match status" value="1"/>
</dbReference>
<keyword id="KW-0001">2Fe-2S</keyword>
<keyword id="KW-0025">Alternative splicing</keyword>
<keyword id="KW-0350">Heme biosynthesis</keyword>
<keyword id="KW-0408">Iron</keyword>
<keyword id="KW-0411">Iron-sulfur</keyword>
<keyword id="KW-0456">Lyase</keyword>
<keyword id="KW-0472">Membrane</keyword>
<keyword id="KW-0479">Metal-binding</keyword>
<keyword id="KW-0496">Mitochondrion</keyword>
<keyword id="KW-0999">Mitochondrion inner membrane</keyword>
<keyword id="KW-0627">Porphyrin biosynthesis</keyword>
<keyword id="KW-1185">Reference proteome</keyword>
<keyword id="KW-0809">Transit peptide</keyword>
<evidence type="ECO:0000250" key="1"/>
<evidence type="ECO:0000250" key="2">
    <source>
        <dbReference type="UniProtKB" id="P22315"/>
    </source>
</evidence>
<evidence type="ECO:0000250" key="3">
    <source>
        <dbReference type="UniProtKB" id="P22830"/>
    </source>
</evidence>
<evidence type="ECO:0000255" key="4"/>
<evidence type="ECO:0000269" key="5">
    <source>
    </source>
</evidence>
<evidence type="ECO:0000303" key="6">
    <source>
    </source>
</evidence>
<evidence type="ECO:0000305" key="7"/>
<evidence type="ECO:0000312" key="8">
    <source>
        <dbReference type="FlyBase" id="FBgn0266268"/>
    </source>
</evidence>
<name>HEMH_DROME</name>
<protein>
    <recommendedName>
        <fullName evidence="7">Ferrochelatase, mitochondrial</fullName>
        <ecNumber evidence="5">4.98.1.1</ecNumber>
    </recommendedName>
    <alternativeName>
        <fullName>Heme synthase</fullName>
    </alternativeName>
    <alternativeName>
        <fullName>Protoheme ferro-lyase</fullName>
    </alternativeName>
</protein>
<sequence>MFLHNTKFCRLASGLAGGVRNLSGQKPKTAILMLNMGGPTHTDQVHDYLLRIMTDRDMIQLPVQSRLGPWIAQRRTPEVQKKYKEIGGGSPILKWTELQGQLMCEQLDRISPETAPHKHYVGFRYVNPLTENTLAEIEKDKPERVVLFSQYPQYSCATSGSSFNSIFTHYRSNNLPSDIKWSIIDRWGTHPLLIKTFAQRIRDELAKFVETKRNDVVILFTAHSLPLKAVNRGDAYPSEIGASVHMVMQELGQTNPYSLAWQSKVGPLPWLAPATDDAIKGYVKQGLKNFILVPIAFVNEHIETLHELDIEYCDELAKEVGVEEIRRAATPNDHPLFIDALTNVVADHLKSQQAVNPKFLMRCPMCSNPKCRESKSWYRQLCSN</sequence>
<accession>Q9V9S8</accession>
<accession>O76533</accession>
<accession>Q8IGA4</accession>
<accession>Q8IH67</accession>
<accession>Q8IMF9</accession>
<accession>Q95U82</accession>
<reference key="1">
    <citation type="journal article" date="1998" name="J. Biol. Chem.">
        <title>Evidence that the fourth ligand to the 2Fe-2S cluster in animal ferrochelatase is a cysteine. Characterization of the enzyme from Drosophila melanogaster.</title>
        <authorList>
            <person name="Sellers V.M."/>
            <person name="Wang K.-F."/>
            <person name="Johnson M.K."/>
            <person name="Dailey H.A."/>
        </authorList>
    </citation>
    <scope>NUCLEOTIDE SEQUENCE [MRNA] (ISOFORM A)</scope>
    <scope>FUNCTION</scope>
    <scope>CATALYTIC ACTIVITY</scope>
</reference>
<reference key="2">
    <citation type="journal article" date="2000" name="Science">
        <title>The genome sequence of Drosophila melanogaster.</title>
        <authorList>
            <person name="Adams M.D."/>
            <person name="Celniker S.E."/>
            <person name="Holt R.A."/>
            <person name="Evans C.A."/>
            <person name="Gocayne J.D."/>
            <person name="Amanatides P.G."/>
            <person name="Scherer S.E."/>
            <person name="Li P.W."/>
            <person name="Hoskins R.A."/>
            <person name="Galle R.F."/>
            <person name="George R.A."/>
            <person name="Lewis S.E."/>
            <person name="Richards S."/>
            <person name="Ashburner M."/>
            <person name="Henderson S.N."/>
            <person name="Sutton G.G."/>
            <person name="Wortman J.R."/>
            <person name="Yandell M.D."/>
            <person name="Zhang Q."/>
            <person name="Chen L.X."/>
            <person name="Brandon R.C."/>
            <person name="Rogers Y.-H.C."/>
            <person name="Blazej R.G."/>
            <person name="Champe M."/>
            <person name="Pfeiffer B.D."/>
            <person name="Wan K.H."/>
            <person name="Doyle C."/>
            <person name="Baxter E.G."/>
            <person name="Helt G."/>
            <person name="Nelson C.R."/>
            <person name="Miklos G.L.G."/>
            <person name="Abril J.F."/>
            <person name="Agbayani A."/>
            <person name="An H.-J."/>
            <person name="Andrews-Pfannkoch C."/>
            <person name="Baldwin D."/>
            <person name="Ballew R.M."/>
            <person name="Basu A."/>
            <person name="Baxendale J."/>
            <person name="Bayraktaroglu L."/>
            <person name="Beasley E.M."/>
            <person name="Beeson K.Y."/>
            <person name="Benos P.V."/>
            <person name="Berman B.P."/>
            <person name="Bhandari D."/>
            <person name="Bolshakov S."/>
            <person name="Borkova D."/>
            <person name="Botchan M.R."/>
            <person name="Bouck J."/>
            <person name="Brokstein P."/>
            <person name="Brottier P."/>
            <person name="Burtis K.C."/>
            <person name="Busam D.A."/>
            <person name="Butler H."/>
            <person name="Cadieu E."/>
            <person name="Center A."/>
            <person name="Chandra I."/>
            <person name="Cherry J.M."/>
            <person name="Cawley S."/>
            <person name="Dahlke C."/>
            <person name="Davenport L.B."/>
            <person name="Davies P."/>
            <person name="de Pablos B."/>
            <person name="Delcher A."/>
            <person name="Deng Z."/>
            <person name="Mays A.D."/>
            <person name="Dew I."/>
            <person name="Dietz S.M."/>
            <person name="Dodson K."/>
            <person name="Doup L.E."/>
            <person name="Downes M."/>
            <person name="Dugan-Rocha S."/>
            <person name="Dunkov B.C."/>
            <person name="Dunn P."/>
            <person name="Durbin K.J."/>
            <person name="Evangelista C.C."/>
            <person name="Ferraz C."/>
            <person name="Ferriera S."/>
            <person name="Fleischmann W."/>
            <person name="Fosler C."/>
            <person name="Gabrielian A.E."/>
            <person name="Garg N.S."/>
            <person name="Gelbart W.M."/>
            <person name="Glasser K."/>
            <person name="Glodek A."/>
            <person name="Gong F."/>
            <person name="Gorrell J.H."/>
            <person name="Gu Z."/>
            <person name="Guan P."/>
            <person name="Harris M."/>
            <person name="Harris N.L."/>
            <person name="Harvey D.A."/>
            <person name="Heiman T.J."/>
            <person name="Hernandez J.R."/>
            <person name="Houck J."/>
            <person name="Hostin D."/>
            <person name="Houston K.A."/>
            <person name="Howland T.J."/>
            <person name="Wei M.-H."/>
            <person name="Ibegwam C."/>
            <person name="Jalali M."/>
            <person name="Kalush F."/>
            <person name="Karpen G.H."/>
            <person name="Ke Z."/>
            <person name="Kennison J.A."/>
            <person name="Ketchum K.A."/>
            <person name="Kimmel B.E."/>
            <person name="Kodira C.D."/>
            <person name="Kraft C.L."/>
            <person name="Kravitz S."/>
            <person name="Kulp D."/>
            <person name="Lai Z."/>
            <person name="Lasko P."/>
            <person name="Lei Y."/>
            <person name="Levitsky A.A."/>
            <person name="Li J.H."/>
            <person name="Li Z."/>
            <person name="Liang Y."/>
            <person name="Lin X."/>
            <person name="Liu X."/>
            <person name="Mattei B."/>
            <person name="McIntosh T.C."/>
            <person name="McLeod M.P."/>
            <person name="McPherson D."/>
            <person name="Merkulov G."/>
            <person name="Milshina N.V."/>
            <person name="Mobarry C."/>
            <person name="Morris J."/>
            <person name="Moshrefi A."/>
            <person name="Mount S.M."/>
            <person name="Moy M."/>
            <person name="Murphy B."/>
            <person name="Murphy L."/>
            <person name="Muzny D.M."/>
            <person name="Nelson D.L."/>
            <person name="Nelson D.R."/>
            <person name="Nelson K.A."/>
            <person name="Nixon K."/>
            <person name="Nusskern D.R."/>
            <person name="Pacleb J.M."/>
            <person name="Palazzolo M."/>
            <person name="Pittman G.S."/>
            <person name="Pan S."/>
            <person name="Pollard J."/>
            <person name="Puri V."/>
            <person name="Reese M.G."/>
            <person name="Reinert K."/>
            <person name="Remington K."/>
            <person name="Saunders R.D.C."/>
            <person name="Scheeler F."/>
            <person name="Shen H."/>
            <person name="Shue B.C."/>
            <person name="Siden-Kiamos I."/>
            <person name="Simpson M."/>
            <person name="Skupski M.P."/>
            <person name="Smith T.J."/>
            <person name="Spier E."/>
            <person name="Spradling A.C."/>
            <person name="Stapleton M."/>
            <person name="Strong R."/>
            <person name="Sun E."/>
            <person name="Svirskas R."/>
            <person name="Tector C."/>
            <person name="Turner R."/>
            <person name="Venter E."/>
            <person name="Wang A.H."/>
            <person name="Wang X."/>
            <person name="Wang Z.-Y."/>
            <person name="Wassarman D.A."/>
            <person name="Weinstock G.M."/>
            <person name="Weissenbach J."/>
            <person name="Williams S.M."/>
            <person name="Woodage T."/>
            <person name="Worley K.C."/>
            <person name="Wu D."/>
            <person name="Yang S."/>
            <person name="Yao Q.A."/>
            <person name="Ye J."/>
            <person name="Yeh R.-F."/>
            <person name="Zaveri J.S."/>
            <person name="Zhan M."/>
            <person name="Zhang G."/>
            <person name="Zhao Q."/>
            <person name="Zheng L."/>
            <person name="Zheng X.H."/>
            <person name="Zhong F.N."/>
            <person name="Zhong W."/>
            <person name="Zhou X."/>
            <person name="Zhu S.C."/>
            <person name="Zhu X."/>
            <person name="Smith H.O."/>
            <person name="Gibbs R.A."/>
            <person name="Myers E.W."/>
            <person name="Rubin G.M."/>
            <person name="Venter J.C."/>
        </authorList>
    </citation>
    <scope>NUCLEOTIDE SEQUENCE [LARGE SCALE GENOMIC DNA]</scope>
    <source>
        <strain>Berkeley</strain>
    </source>
</reference>
<reference key="3">
    <citation type="journal article" date="2002" name="Genome Biol.">
        <title>Annotation of the Drosophila melanogaster euchromatic genome: a systematic review.</title>
        <authorList>
            <person name="Misra S."/>
            <person name="Crosby M.A."/>
            <person name="Mungall C.J."/>
            <person name="Matthews B.B."/>
            <person name="Campbell K.S."/>
            <person name="Hradecky P."/>
            <person name="Huang Y."/>
            <person name="Kaminker J.S."/>
            <person name="Millburn G.H."/>
            <person name="Prochnik S.E."/>
            <person name="Smith C.D."/>
            <person name="Tupy J.L."/>
            <person name="Whitfield E.J."/>
            <person name="Bayraktaroglu L."/>
            <person name="Berman B.P."/>
            <person name="Bettencourt B.R."/>
            <person name="Celniker S.E."/>
            <person name="de Grey A.D.N.J."/>
            <person name="Drysdale R.A."/>
            <person name="Harris N.L."/>
            <person name="Richter J."/>
            <person name="Russo S."/>
            <person name="Schroeder A.J."/>
            <person name="Shu S.Q."/>
            <person name="Stapleton M."/>
            <person name="Yamada C."/>
            <person name="Ashburner M."/>
            <person name="Gelbart W.M."/>
            <person name="Rubin G.M."/>
            <person name="Lewis S.E."/>
        </authorList>
    </citation>
    <scope>GENOME REANNOTATION</scope>
    <scope>ALTERNATIVE SPLICING</scope>
    <source>
        <strain>Berkeley</strain>
    </source>
</reference>
<reference key="4">
    <citation type="journal article" date="2002" name="Genome Biol.">
        <title>A Drosophila full-length cDNA resource.</title>
        <authorList>
            <person name="Stapleton M."/>
            <person name="Carlson J.W."/>
            <person name="Brokstein P."/>
            <person name="Yu C."/>
            <person name="Champe M."/>
            <person name="George R.A."/>
            <person name="Guarin H."/>
            <person name="Kronmiller B."/>
            <person name="Pacleb J.M."/>
            <person name="Park S."/>
            <person name="Wan K.H."/>
            <person name="Rubin G.M."/>
            <person name="Celniker S.E."/>
        </authorList>
    </citation>
    <scope>NUCLEOTIDE SEQUENCE [LARGE SCALE MRNA] (ISOFORMS A; B AND C)</scope>
    <source>
        <strain>Berkeley</strain>
        <tissue>Embryo</tissue>
        <tissue>Head</tissue>
    </source>
</reference>
<comment type="function">
    <text evidence="5">Catalyzes the ferrous insertion into protoporphyrin IX (PubMed:9712849). Terminal enzyme in heme biosynthesis (PubMed:9712849). Contains four conserved cysteines that function as cluster ligands and play a crucial role in maintaining protein structure (PubMed:9712849).</text>
</comment>
<comment type="catalytic activity">
    <reaction evidence="5">
        <text>heme b + 2 H(+) = protoporphyrin IX + Fe(2+)</text>
        <dbReference type="Rhea" id="RHEA:22584"/>
        <dbReference type="ChEBI" id="CHEBI:15378"/>
        <dbReference type="ChEBI" id="CHEBI:29033"/>
        <dbReference type="ChEBI" id="CHEBI:57306"/>
        <dbReference type="ChEBI" id="CHEBI:60344"/>
        <dbReference type="EC" id="4.98.1.1"/>
    </reaction>
    <physiologicalReaction direction="right-to-left" evidence="5">
        <dbReference type="Rhea" id="RHEA:22586"/>
    </physiologicalReaction>
</comment>
<comment type="cofactor">
    <cofactor evidence="3">
        <name>[2Fe-2S] cluster</name>
        <dbReference type="ChEBI" id="CHEBI:190135"/>
    </cofactor>
    <text evidence="3">Binds 1 [2Fe-2S] cluster.</text>
</comment>
<comment type="pathway">
    <text evidence="5">Porphyrin-containing compound metabolism; protoheme biosynthesis; protoheme from protoporphyrin-IX: step 1/1.</text>
</comment>
<comment type="subunit">
    <text evidence="3">Homodimer. Homotetramer.</text>
</comment>
<comment type="subcellular location">
    <subcellularLocation>
        <location evidence="2">Mitochondrion inner membrane</location>
        <topology evidence="2">Peripheral membrane protein</topology>
        <orientation evidence="2">Matrix side</orientation>
    </subcellularLocation>
</comment>
<comment type="alternative products">
    <event type="alternative splicing"/>
    <isoform>
        <id>Q9V9S8-1</id>
        <name>A</name>
        <sequence type="displayed"/>
    </isoform>
    <isoform>
        <id>Q9V9S8-2</id>
        <name>B</name>
        <sequence type="described" ref="VSP_007689 VSP_007690"/>
    </isoform>
    <isoform>
        <id>Q9V9S8-3</id>
        <name>C</name>
        <sequence type="described" ref="VSP_007691 VSP_007692"/>
    </isoform>
</comment>
<comment type="similarity">
    <text evidence="7">Belongs to the ferrochelatase family.</text>
</comment>